<feature type="chain" id="PRO_0000026499" description="Calpain-B">
    <location>
        <begin position="1"/>
        <end position="925"/>
    </location>
</feature>
<feature type="chain" id="PRO_0000026500" description="Calpain-B catalytic subunit 1">
    <location>
        <begin position="75"/>
        <end position="925"/>
    </location>
</feature>
<feature type="chain" id="PRO_0000026501" description="Calpain-B catalytic subunit 2">
    <location>
        <begin position="225"/>
        <end position="925"/>
    </location>
</feature>
<feature type="domain" description="Calpain catalytic" evidence="3">
    <location>
        <begin position="259"/>
        <end position="558"/>
    </location>
</feature>
<feature type="domain" description="EF-hand 1" evidence="4">
    <location>
        <begin position="796"/>
        <end position="831"/>
    </location>
</feature>
<feature type="domain" description="EF-hand 2" evidence="4">
    <location>
        <begin position="826"/>
        <end position="861"/>
    </location>
</feature>
<feature type="region of interest" description="Domain III">
    <location>
        <begin position="559"/>
        <end position="728"/>
    </location>
</feature>
<feature type="region of interest" description="Disordered" evidence="5">
    <location>
        <begin position="723"/>
        <end position="753"/>
    </location>
</feature>
<feature type="region of interest" description="Linker">
    <location>
        <begin position="729"/>
        <end position="748"/>
    </location>
</feature>
<feature type="region of interest" description="Domain IV">
    <location>
        <begin position="749"/>
        <end position="925"/>
    </location>
</feature>
<feature type="active site" evidence="1">
    <location>
        <position position="314"/>
    </location>
</feature>
<feature type="active site" evidence="1">
    <location>
        <position position="470"/>
    </location>
</feature>
<feature type="active site" evidence="1">
    <location>
        <position position="498"/>
    </location>
</feature>
<feature type="binding site" evidence="4">
    <location>
        <position position="809"/>
    </location>
    <ligand>
        <name>Ca(2+)</name>
        <dbReference type="ChEBI" id="CHEBI:29108"/>
        <label>1</label>
    </ligand>
</feature>
<feature type="binding site" evidence="4">
    <location>
        <position position="811"/>
    </location>
    <ligand>
        <name>Ca(2+)</name>
        <dbReference type="ChEBI" id="CHEBI:29108"/>
        <label>1</label>
    </ligand>
</feature>
<feature type="binding site" evidence="4">
    <location>
        <position position="813"/>
    </location>
    <ligand>
        <name>Ca(2+)</name>
        <dbReference type="ChEBI" id="CHEBI:29108"/>
        <label>1</label>
    </ligand>
</feature>
<feature type="binding site" evidence="4">
    <location>
        <position position="815"/>
    </location>
    <ligand>
        <name>Ca(2+)</name>
        <dbReference type="ChEBI" id="CHEBI:29108"/>
        <label>1</label>
    </ligand>
</feature>
<feature type="binding site" evidence="4">
    <location>
        <position position="820"/>
    </location>
    <ligand>
        <name>Ca(2+)</name>
        <dbReference type="ChEBI" id="CHEBI:29108"/>
        <label>1</label>
    </ligand>
</feature>
<feature type="binding site" evidence="9">
    <location>
        <position position="839"/>
    </location>
    <ligand>
        <name>Ca(2+)</name>
        <dbReference type="ChEBI" id="CHEBI:29108"/>
        <label>2</label>
    </ligand>
</feature>
<feature type="binding site" evidence="9">
    <location>
        <position position="843"/>
    </location>
    <ligand>
        <name>Ca(2+)</name>
        <dbReference type="ChEBI" id="CHEBI:29108"/>
        <label>2</label>
    </ligand>
</feature>
<feature type="binding site" evidence="9">
    <location>
        <position position="845"/>
    </location>
    <ligand>
        <name>Ca(2+)</name>
        <dbReference type="ChEBI" id="CHEBI:29108"/>
        <label>2</label>
    </ligand>
</feature>
<feature type="binding site" evidence="9">
    <location>
        <position position="850"/>
    </location>
    <ligand>
        <name>Ca(2+)</name>
        <dbReference type="ChEBI" id="CHEBI:29108"/>
        <label>2</label>
    </ligand>
</feature>
<feature type="site" description="Cleavage; by autolysis">
    <location>
        <begin position="74"/>
        <end position="75"/>
    </location>
</feature>
<feature type="site" description="Cleavage; by autolysis">
    <location>
        <begin position="224"/>
        <end position="225"/>
    </location>
</feature>
<feature type="mutagenesis site" description="Autolysis site shifted to nearby, less-active sites." evidence="8">
    <original>QNA</original>
    <variation>GVP</variation>
    <location>
        <begin position="73"/>
        <end position="75"/>
    </location>
</feature>
<feature type="mutagenesis site" description="Autolysis site shifted to nearby, less-active site(s)." evidence="8">
    <original>NQ</original>
    <variation>AV</variation>
    <location>
        <begin position="223"/>
        <end position="224"/>
    </location>
</feature>
<feature type="sequence conflict" description="In Ref. 1; AAD04331." evidence="9" ref="1">
    <original>D</original>
    <variation>G</variation>
    <location>
        <position position="292"/>
    </location>
</feature>
<feature type="sequence conflict" description="In Ref. 1; AAD04331." evidence="9" ref="1">
    <original>D</original>
    <variation>E</variation>
    <location>
        <position position="313"/>
    </location>
</feature>
<feature type="sequence conflict" description="In Ref. 1; AAD04331." evidence="9" ref="1">
    <original>N</original>
    <variation>I</variation>
    <location>
        <position position="432"/>
    </location>
</feature>
<feature type="sequence conflict" description="In Ref. 1; AAD04331." evidence="9" ref="1">
    <original>E</original>
    <variation>D</variation>
    <location>
        <position position="537"/>
    </location>
</feature>
<feature type="sequence conflict" description="In Ref. 1; AAD04331." evidence="9" ref="1">
    <original>D</original>
    <variation>E</variation>
    <location>
        <position position="544"/>
    </location>
</feature>
<feature type="sequence conflict" description="In Ref. 1; AAD04331." evidence="9" ref="1">
    <original>AF</original>
    <variation>GS</variation>
    <location>
        <begin position="911"/>
        <end position="912"/>
    </location>
</feature>
<dbReference type="EC" id="3.4.22.-"/>
<dbReference type="EMBL" id="AF062404">
    <property type="protein sequence ID" value="AAD04331.2"/>
    <property type="molecule type" value="mRNA"/>
</dbReference>
<dbReference type="EMBL" id="AE014296">
    <property type="protein sequence ID" value="AAF50189.2"/>
    <property type="molecule type" value="Genomic_DNA"/>
</dbReference>
<dbReference type="EMBL" id="BT031259">
    <property type="protein sequence ID" value="ABY20500.1"/>
    <property type="molecule type" value="mRNA"/>
</dbReference>
<dbReference type="RefSeq" id="NP_001246706.1">
    <property type="nucleotide sequence ID" value="NM_001259777.2"/>
</dbReference>
<dbReference type="RefSeq" id="NP_524016.4">
    <property type="nucleotide sequence ID" value="NM_079292.5"/>
</dbReference>
<dbReference type="SMR" id="Q9VT65"/>
<dbReference type="BioGRID" id="64552">
    <property type="interactions" value="14"/>
</dbReference>
<dbReference type="FunCoup" id="Q9VT65">
    <property type="interactions" value="129"/>
</dbReference>
<dbReference type="IntAct" id="Q9VT65">
    <property type="interactions" value="6"/>
</dbReference>
<dbReference type="MINT" id="Q9VT65"/>
<dbReference type="STRING" id="7227.FBpp0076072"/>
<dbReference type="MEROPS" id="C02.015"/>
<dbReference type="GlyGen" id="Q9VT65">
    <property type="glycosylation" value="4 sites"/>
</dbReference>
<dbReference type="iPTMnet" id="Q9VT65"/>
<dbReference type="PaxDb" id="7227-FBpp0076072"/>
<dbReference type="EnsemblMetazoa" id="FBtr0076343">
    <property type="protein sequence ID" value="FBpp0076072"/>
    <property type="gene ID" value="FBgn0025866"/>
</dbReference>
<dbReference type="EnsemblMetazoa" id="FBtr0304675">
    <property type="protein sequence ID" value="FBpp0293217"/>
    <property type="gene ID" value="FBgn0025866"/>
</dbReference>
<dbReference type="GeneID" id="39165"/>
<dbReference type="KEGG" id="dme:Dmel_CG8107"/>
<dbReference type="AGR" id="FB:FBgn0025866"/>
<dbReference type="CTD" id="39165"/>
<dbReference type="FlyBase" id="FBgn0025866">
    <property type="gene designation" value="CalpB"/>
</dbReference>
<dbReference type="VEuPathDB" id="VectorBase:FBgn0025866"/>
<dbReference type="eggNOG" id="KOG0045">
    <property type="taxonomic scope" value="Eukaryota"/>
</dbReference>
<dbReference type="GeneTree" id="ENSGT00940000170528"/>
<dbReference type="HOGENOM" id="CLU_010982_2_0_1"/>
<dbReference type="InParanoid" id="Q9VT65"/>
<dbReference type="OMA" id="QTTHAQN"/>
<dbReference type="OrthoDB" id="424753at2759"/>
<dbReference type="PhylomeDB" id="Q9VT65"/>
<dbReference type="BRENDA" id="3.4.22.B37">
    <property type="organism ID" value="1994"/>
</dbReference>
<dbReference type="Reactome" id="R-DME-6798695">
    <property type="pathway name" value="Neutrophil degranulation"/>
</dbReference>
<dbReference type="SignaLink" id="Q9VT65"/>
<dbReference type="BioGRID-ORCS" id="39165">
    <property type="hits" value="0 hits in 3 CRISPR screens"/>
</dbReference>
<dbReference type="GenomeRNAi" id="39165"/>
<dbReference type="PRO" id="PR:Q9VT65"/>
<dbReference type="Proteomes" id="UP000000803">
    <property type="component" value="Chromosome 3L"/>
</dbReference>
<dbReference type="Bgee" id="FBgn0025866">
    <property type="expression patterns" value="Expressed in spermathecum and 146 other cell types or tissues"/>
</dbReference>
<dbReference type="ExpressionAtlas" id="Q9VT65">
    <property type="expression patterns" value="baseline and differential"/>
</dbReference>
<dbReference type="GO" id="GO:0005737">
    <property type="term" value="C:cytoplasm"/>
    <property type="evidence" value="ECO:0000314"/>
    <property type="project" value="UniProtKB"/>
</dbReference>
<dbReference type="GO" id="GO:0016020">
    <property type="term" value="C:membrane"/>
    <property type="evidence" value="ECO:0007669"/>
    <property type="project" value="UniProtKB-SubCell"/>
</dbReference>
<dbReference type="GO" id="GO:0005509">
    <property type="term" value="F:calcium ion binding"/>
    <property type="evidence" value="ECO:0000303"/>
    <property type="project" value="UniProtKB"/>
</dbReference>
<dbReference type="GO" id="GO:0004198">
    <property type="term" value="F:calcium-dependent cysteine-type endopeptidase activity"/>
    <property type="evidence" value="ECO:0000314"/>
    <property type="project" value="UniProtKB"/>
</dbReference>
<dbReference type="GO" id="GO:0007298">
    <property type="term" value="P:border follicle cell migration"/>
    <property type="evidence" value="ECO:0000315"/>
    <property type="project" value="FlyBase"/>
</dbReference>
<dbReference type="GO" id="GO:0016322">
    <property type="term" value="P:neuron remodeling"/>
    <property type="evidence" value="ECO:0000315"/>
    <property type="project" value="FlyBase"/>
</dbReference>
<dbReference type="GO" id="GO:0016540">
    <property type="term" value="P:protein autoprocessing"/>
    <property type="evidence" value="ECO:0000314"/>
    <property type="project" value="FlyBase"/>
</dbReference>
<dbReference type="GO" id="GO:0006508">
    <property type="term" value="P:proteolysis"/>
    <property type="evidence" value="ECO:0000314"/>
    <property type="project" value="UniProtKB"/>
</dbReference>
<dbReference type="CDD" id="cd00214">
    <property type="entry name" value="Calpain_III"/>
    <property type="match status" value="1"/>
</dbReference>
<dbReference type="CDD" id="cd00044">
    <property type="entry name" value="CysPc"/>
    <property type="match status" value="1"/>
</dbReference>
<dbReference type="CDD" id="cd16196">
    <property type="entry name" value="EFh_PEF_CalpA_B"/>
    <property type="match status" value="1"/>
</dbReference>
<dbReference type="FunFam" id="2.60.120.380:FF:000001">
    <property type="entry name" value="Calpain-1 catalytic subunit"/>
    <property type="match status" value="1"/>
</dbReference>
<dbReference type="FunFam" id="3.90.70.10:FF:000001">
    <property type="entry name" value="Calpain-1 catalytic subunit"/>
    <property type="match status" value="1"/>
</dbReference>
<dbReference type="FunFam" id="1.10.238.10:FF:000241">
    <property type="entry name" value="Calpain-A, isoform C"/>
    <property type="match status" value="1"/>
</dbReference>
<dbReference type="Gene3D" id="2.60.120.380">
    <property type="match status" value="1"/>
</dbReference>
<dbReference type="Gene3D" id="3.90.70.10">
    <property type="entry name" value="Cysteine proteinases"/>
    <property type="match status" value="1"/>
</dbReference>
<dbReference type="Gene3D" id="1.10.238.10">
    <property type="entry name" value="EF-hand"/>
    <property type="match status" value="1"/>
</dbReference>
<dbReference type="InterPro" id="IPR033883">
    <property type="entry name" value="C2_III"/>
</dbReference>
<dbReference type="InterPro" id="IPR022684">
    <property type="entry name" value="Calpain_cysteine_protease"/>
</dbReference>
<dbReference type="InterPro" id="IPR022682">
    <property type="entry name" value="Calpain_domain_III"/>
</dbReference>
<dbReference type="InterPro" id="IPR022683">
    <property type="entry name" value="Calpain_III"/>
</dbReference>
<dbReference type="InterPro" id="IPR036213">
    <property type="entry name" value="Calpain_III_sf"/>
</dbReference>
<dbReference type="InterPro" id="IPR011992">
    <property type="entry name" value="EF-hand-dom_pair"/>
</dbReference>
<dbReference type="InterPro" id="IPR018247">
    <property type="entry name" value="EF_Hand_1_Ca_BS"/>
</dbReference>
<dbReference type="InterPro" id="IPR002048">
    <property type="entry name" value="EF_hand_dom"/>
</dbReference>
<dbReference type="InterPro" id="IPR038765">
    <property type="entry name" value="Papain-like_cys_pep_sf"/>
</dbReference>
<dbReference type="InterPro" id="IPR000169">
    <property type="entry name" value="Pept_cys_AS"/>
</dbReference>
<dbReference type="InterPro" id="IPR001300">
    <property type="entry name" value="Peptidase_C2_calpain_cat"/>
</dbReference>
<dbReference type="PANTHER" id="PTHR10183">
    <property type="entry name" value="CALPAIN"/>
    <property type="match status" value="1"/>
</dbReference>
<dbReference type="PANTHER" id="PTHR10183:SF433">
    <property type="entry name" value="CALPAIN-A-RELATED"/>
    <property type="match status" value="1"/>
</dbReference>
<dbReference type="Pfam" id="PF01067">
    <property type="entry name" value="Calpain_III"/>
    <property type="match status" value="1"/>
</dbReference>
<dbReference type="Pfam" id="PF00648">
    <property type="entry name" value="Peptidase_C2"/>
    <property type="match status" value="1"/>
</dbReference>
<dbReference type="PRINTS" id="PR00704">
    <property type="entry name" value="CALPAIN"/>
</dbReference>
<dbReference type="SMART" id="SM00720">
    <property type="entry name" value="calpain_III"/>
    <property type="match status" value="1"/>
</dbReference>
<dbReference type="SMART" id="SM00230">
    <property type="entry name" value="CysPc"/>
    <property type="match status" value="1"/>
</dbReference>
<dbReference type="SMART" id="SM00054">
    <property type="entry name" value="EFh"/>
    <property type="match status" value="2"/>
</dbReference>
<dbReference type="SUPFAM" id="SSF49758">
    <property type="entry name" value="Calpain large subunit, middle domain (domain III)"/>
    <property type="match status" value="1"/>
</dbReference>
<dbReference type="SUPFAM" id="SSF54001">
    <property type="entry name" value="Cysteine proteinases"/>
    <property type="match status" value="1"/>
</dbReference>
<dbReference type="SUPFAM" id="SSF47473">
    <property type="entry name" value="EF-hand"/>
    <property type="match status" value="1"/>
</dbReference>
<dbReference type="PROSITE" id="PS50203">
    <property type="entry name" value="CALPAIN_CAT"/>
    <property type="match status" value="1"/>
</dbReference>
<dbReference type="PROSITE" id="PS00018">
    <property type="entry name" value="EF_HAND_1"/>
    <property type="match status" value="1"/>
</dbReference>
<dbReference type="PROSITE" id="PS50222">
    <property type="entry name" value="EF_HAND_2"/>
    <property type="match status" value="2"/>
</dbReference>
<dbReference type="PROSITE" id="PS00139">
    <property type="entry name" value="THIOL_PROTEASE_CYS"/>
    <property type="match status" value="1"/>
</dbReference>
<reference evidence="9 10" key="1">
    <citation type="journal article" date="1999" name="J. Biol. Chem.">
        <title>Characterization of two recombinant Drosophila calpains. CALPA and a novel homolog, CALPB.</title>
        <authorList>
            <person name="Jekely G."/>
            <person name="Friedrich P."/>
        </authorList>
    </citation>
    <scope>NUCLEOTIDE SEQUENCE [MRNA]</scope>
    <scope>PARTIAL PROTEIN SEQUENCE</scope>
    <scope>FUNCTION</scope>
    <scope>CATALYTIC ACTIVITY</scope>
    <scope>ACTIVITY REGULATION</scope>
    <scope>AUTOCATALYTIC CLEAVAGE</scope>
    <source>
        <tissue evidence="6">Embryo</tissue>
    </source>
</reference>
<reference evidence="9 10" key="2">
    <citation type="journal article" date="2004" name="Biochem. J.">
        <title>Autolytic activation and localization in Schneider cells (S2) of calpain B from Drosophila.</title>
        <authorList>
            <person name="Farkas A."/>
            <person name="Tompa P."/>
            <person name="Schad E."/>
            <person name="Sinka R."/>
            <person name="Jekely G."/>
            <person name="Friedrich P."/>
        </authorList>
    </citation>
    <scope>SEQUENCE REVISION TO N-TERMINUS</scope>
    <scope>PARTIAL PROTEIN SEQUENCE</scope>
    <scope>SUBCELLULAR LOCATION</scope>
    <scope>TISSUE SPECIFICITY</scope>
    <scope>DEVELOPMENTAL STAGE</scope>
    <scope>AUTOCATALYTIC CLEAVAGE</scope>
    <scope>MUTAGENESIS OF 73-GLN--ALA-75 AND 223-ASN-GLN-224</scope>
</reference>
<reference evidence="11" key="3">
    <citation type="journal article" date="2000" name="Science">
        <title>The genome sequence of Drosophila melanogaster.</title>
        <authorList>
            <person name="Adams M.D."/>
            <person name="Celniker S.E."/>
            <person name="Holt R.A."/>
            <person name="Evans C.A."/>
            <person name="Gocayne J.D."/>
            <person name="Amanatides P.G."/>
            <person name="Scherer S.E."/>
            <person name="Li P.W."/>
            <person name="Hoskins R.A."/>
            <person name="Galle R.F."/>
            <person name="George R.A."/>
            <person name="Lewis S.E."/>
            <person name="Richards S."/>
            <person name="Ashburner M."/>
            <person name="Henderson S.N."/>
            <person name="Sutton G.G."/>
            <person name="Wortman J.R."/>
            <person name="Yandell M.D."/>
            <person name="Zhang Q."/>
            <person name="Chen L.X."/>
            <person name="Brandon R.C."/>
            <person name="Rogers Y.-H.C."/>
            <person name="Blazej R.G."/>
            <person name="Champe M."/>
            <person name="Pfeiffer B.D."/>
            <person name="Wan K.H."/>
            <person name="Doyle C."/>
            <person name="Baxter E.G."/>
            <person name="Helt G."/>
            <person name="Nelson C.R."/>
            <person name="Miklos G.L.G."/>
            <person name="Abril J.F."/>
            <person name="Agbayani A."/>
            <person name="An H.-J."/>
            <person name="Andrews-Pfannkoch C."/>
            <person name="Baldwin D."/>
            <person name="Ballew R.M."/>
            <person name="Basu A."/>
            <person name="Baxendale J."/>
            <person name="Bayraktaroglu L."/>
            <person name="Beasley E.M."/>
            <person name="Beeson K.Y."/>
            <person name="Benos P.V."/>
            <person name="Berman B.P."/>
            <person name="Bhandari D."/>
            <person name="Bolshakov S."/>
            <person name="Borkova D."/>
            <person name="Botchan M.R."/>
            <person name="Bouck J."/>
            <person name="Brokstein P."/>
            <person name="Brottier P."/>
            <person name="Burtis K.C."/>
            <person name="Busam D.A."/>
            <person name="Butler H."/>
            <person name="Cadieu E."/>
            <person name="Center A."/>
            <person name="Chandra I."/>
            <person name="Cherry J.M."/>
            <person name="Cawley S."/>
            <person name="Dahlke C."/>
            <person name="Davenport L.B."/>
            <person name="Davies P."/>
            <person name="de Pablos B."/>
            <person name="Delcher A."/>
            <person name="Deng Z."/>
            <person name="Mays A.D."/>
            <person name="Dew I."/>
            <person name="Dietz S.M."/>
            <person name="Dodson K."/>
            <person name="Doup L.E."/>
            <person name="Downes M."/>
            <person name="Dugan-Rocha S."/>
            <person name="Dunkov B.C."/>
            <person name="Dunn P."/>
            <person name="Durbin K.J."/>
            <person name="Evangelista C.C."/>
            <person name="Ferraz C."/>
            <person name="Ferriera S."/>
            <person name="Fleischmann W."/>
            <person name="Fosler C."/>
            <person name="Gabrielian A.E."/>
            <person name="Garg N.S."/>
            <person name="Gelbart W.M."/>
            <person name="Glasser K."/>
            <person name="Glodek A."/>
            <person name="Gong F."/>
            <person name="Gorrell J.H."/>
            <person name="Gu Z."/>
            <person name="Guan P."/>
            <person name="Harris M."/>
            <person name="Harris N.L."/>
            <person name="Harvey D.A."/>
            <person name="Heiman T.J."/>
            <person name="Hernandez J.R."/>
            <person name="Houck J."/>
            <person name="Hostin D."/>
            <person name="Houston K.A."/>
            <person name="Howland T.J."/>
            <person name="Wei M.-H."/>
            <person name="Ibegwam C."/>
            <person name="Jalali M."/>
            <person name="Kalush F."/>
            <person name="Karpen G.H."/>
            <person name="Ke Z."/>
            <person name="Kennison J.A."/>
            <person name="Ketchum K.A."/>
            <person name="Kimmel B.E."/>
            <person name="Kodira C.D."/>
            <person name="Kraft C.L."/>
            <person name="Kravitz S."/>
            <person name="Kulp D."/>
            <person name="Lai Z."/>
            <person name="Lasko P."/>
            <person name="Lei Y."/>
            <person name="Levitsky A.A."/>
            <person name="Li J.H."/>
            <person name="Li Z."/>
            <person name="Liang Y."/>
            <person name="Lin X."/>
            <person name="Liu X."/>
            <person name="Mattei B."/>
            <person name="McIntosh T.C."/>
            <person name="McLeod M.P."/>
            <person name="McPherson D."/>
            <person name="Merkulov G."/>
            <person name="Milshina N.V."/>
            <person name="Mobarry C."/>
            <person name="Morris J."/>
            <person name="Moshrefi A."/>
            <person name="Mount S.M."/>
            <person name="Moy M."/>
            <person name="Murphy B."/>
            <person name="Murphy L."/>
            <person name="Muzny D.M."/>
            <person name="Nelson D.L."/>
            <person name="Nelson D.R."/>
            <person name="Nelson K.A."/>
            <person name="Nixon K."/>
            <person name="Nusskern D.R."/>
            <person name="Pacleb J.M."/>
            <person name="Palazzolo M."/>
            <person name="Pittman G.S."/>
            <person name="Pan S."/>
            <person name="Pollard J."/>
            <person name="Puri V."/>
            <person name="Reese M.G."/>
            <person name="Reinert K."/>
            <person name="Remington K."/>
            <person name="Saunders R.D.C."/>
            <person name="Scheeler F."/>
            <person name="Shen H."/>
            <person name="Shue B.C."/>
            <person name="Siden-Kiamos I."/>
            <person name="Simpson M."/>
            <person name="Skupski M.P."/>
            <person name="Smith T.J."/>
            <person name="Spier E."/>
            <person name="Spradling A.C."/>
            <person name="Stapleton M."/>
            <person name="Strong R."/>
            <person name="Sun E."/>
            <person name="Svirskas R."/>
            <person name="Tector C."/>
            <person name="Turner R."/>
            <person name="Venter E."/>
            <person name="Wang A.H."/>
            <person name="Wang X."/>
            <person name="Wang Z.-Y."/>
            <person name="Wassarman D.A."/>
            <person name="Weinstock G.M."/>
            <person name="Weissenbach J."/>
            <person name="Williams S.M."/>
            <person name="Woodage T."/>
            <person name="Worley K.C."/>
            <person name="Wu D."/>
            <person name="Yang S."/>
            <person name="Yao Q.A."/>
            <person name="Ye J."/>
            <person name="Yeh R.-F."/>
            <person name="Zaveri J.S."/>
            <person name="Zhan M."/>
            <person name="Zhang G."/>
            <person name="Zhao Q."/>
            <person name="Zheng L."/>
            <person name="Zheng X.H."/>
            <person name="Zhong F.N."/>
            <person name="Zhong W."/>
            <person name="Zhou X."/>
            <person name="Zhu S.C."/>
            <person name="Zhu X."/>
            <person name="Smith H.O."/>
            <person name="Gibbs R.A."/>
            <person name="Myers E.W."/>
            <person name="Rubin G.M."/>
            <person name="Venter J.C."/>
        </authorList>
    </citation>
    <scope>NUCLEOTIDE SEQUENCE [LARGE SCALE GENOMIC DNA]</scope>
    <source>
        <strain evidence="7">Berkeley</strain>
    </source>
</reference>
<reference evidence="9 11" key="4">
    <citation type="journal article" date="2002" name="Genome Biol.">
        <title>Annotation of the Drosophila melanogaster euchromatic genome: a systematic review.</title>
        <authorList>
            <person name="Misra S."/>
            <person name="Crosby M.A."/>
            <person name="Mungall C.J."/>
            <person name="Matthews B.B."/>
            <person name="Campbell K.S."/>
            <person name="Hradecky P."/>
            <person name="Huang Y."/>
            <person name="Kaminker J.S."/>
            <person name="Millburn G.H."/>
            <person name="Prochnik S.E."/>
            <person name="Smith C.D."/>
            <person name="Tupy J.L."/>
            <person name="Whitfield E.J."/>
            <person name="Bayraktaroglu L."/>
            <person name="Berman B.P."/>
            <person name="Bettencourt B.R."/>
            <person name="Celniker S.E."/>
            <person name="de Grey A.D.N.J."/>
            <person name="Drysdale R.A."/>
            <person name="Harris N.L."/>
            <person name="Richter J."/>
            <person name="Russo S."/>
            <person name="Schroeder A.J."/>
            <person name="Shu S.Q."/>
            <person name="Stapleton M."/>
            <person name="Yamada C."/>
            <person name="Ashburner M."/>
            <person name="Gelbart W.M."/>
            <person name="Rubin G.M."/>
            <person name="Lewis S.E."/>
        </authorList>
    </citation>
    <scope>GENOME REANNOTATION</scope>
    <source>
        <strain>Berkeley</strain>
    </source>
</reference>
<reference key="5">
    <citation type="submission" date="2007-12" db="EMBL/GenBank/DDBJ databases">
        <authorList>
            <person name="Stapleton M."/>
            <person name="Carlson J.W."/>
            <person name="Frise E."/>
            <person name="Kapadia B."/>
            <person name="Park S."/>
            <person name="Wan K.H."/>
            <person name="Yu C."/>
            <person name="Celniker S.E."/>
        </authorList>
    </citation>
    <scope>NUCLEOTIDE SEQUENCE [LARGE SCALE MRNA]</scope>
    <source>
        <strain>Berkeley</strain>
        <tissue>Embryo</tissue>
    </source>
</reference>
<accession>Q9VT65</accession>
<accession>A9UN95</accession>
<accession>O96454</accession>
<organism>
    <name type="scientific">Drosophila melanogaster</name>
    <name type="common">Fruit fly</name>
    <dbReference type="NCBI Taxonomy" id="7227"/>
    <lineage>
        <taxon>Eukaryota</taxon>
        <taxon>Metazoa</taxon>
        <taxon>Ecdysozoa</taxon>
        <taxon>Arthropoda</taxon>
        <taxon>Hexapoda</taxon>
        <taxon>Insecta</taxon>
        <taxon>Pterygota</taxon>
        <taxon>Neoptera</taxon>
        <taxon>Endopterygota</taxon>
        <taxon>Diptera</taxon>
        <taxon>Brachycera</taxon>
        <taxon>Muscomorpha</taxon>
        <taxon>Ephydroidea</taxon>
        <taxon>Drosophilidae</taxon>
        <taxon>Drosophila</taxon>
        <taxon>Sophophora</taxon>
    </lineage>
</organism>
<name>CANB_DROME</name>
<keyword id="KW-0068">Autocatalytic cleavage</keyword>
<keyword id="KW-0106">Calcium</keyword>
<keyword id="KW-0963">Cytoplasm</keyword>
<keyword id="KW-0903">Direct protein sequencing</keyword>
<keyword id="KW-0378">Hydrolase</keyword>
<keyword id="KW-0472">Membrane</keyword>
<keyword id="KW-0479">Metal-binding</keyword>
<keyword id="KW-0645">Protease</keyword>
<keyword id="KW-1185">Reference proteome</keyword>
<keyword id="KW-0677">Repeat</keyword>
<keyword id="KW-0788">Thiol protease</keyword>
<gene>
    <name evidence="11 12" type="primary">CalpB</name>
    <name type="ORF">CG8107</name>
</gene>
<evidence type="ECO:0000250" key="1">
    <source>
        <dbReference type="UniProtKB" id="Q07009"/>
    </source>
</evidence>
<evidence type="ECO:0000255" key="2"/>
<evidence type="ECO:0000255" key="3">
    <source>
        <dbReference type="PROSITE-ProRule" id="PRU00239"/>
    </source>
</evidence>
<evidence type="ECO:0000255" key="4">
    <source>
        <dbReference type="PROSITE-ProRule" id="PRU00448"/>
    </source>
</evidence>
<evidence type="ECO:0000256" key="5">
    <source>
        <dbReference type="SAM" id="MobiDB-lite"/>
    </source>
</evidence>
<evidence type="ECO:0000269" key="6">
    <source>
    </source>
</evidence>
<evidence type="ECO:0000269" key="7">
    <source>
    </source>
</evidence>
<evidence type="ECO:0000269" key="8">
    <source>
    </source>
</evidence>
<evidence type="ECO:0000305" key="9"/>
<evidence type="ECO:0000312" key="10">
    <source>
        <dbReference type="EMBL" id="AAD04331.2"/>
    </source>
</evidence>
<evidence type="ECO:0000312" key="11">
    <source>
        <dbReference type="EMBL" id="AAF50189.2"/>
    </source>
</evidence>
<evidence type="ECO:0000312" key="12">
    <source>
        <dbReference type="FlyBase" id="FBgn0025866"/>
    </source>
</evidence>
<sequence>MYGIDNYPKNYHASGIGLVNLAALGYSKNEVSGGNEGGGAPKPKAGLYPSLPYPSSESVGGMPYVVKQTSHAQNASYAGPTMGMGMPVPEAPSAPAPYPSATPYPGSGLYPSLPSANVSSLPYPTAPMAPYPTGMPYPTGMPQPNLPYPAAPLAPYPSAMPGLPGMPMPYAPMPTSPAPQHNIGFPALPYPTAPPPESAPTQEEEPSVGVAELSFTSVKVPENQNMFWMGRKATSARQNSVSKGDFQSLRDSCLANGTMFEDPDFPATNASLMYSRRPDRYYEWLRPGDIADDPQFFVEGYSRFDVQQGELGDCWLLAAAANLTQDSTLFFRVIPPDQDFQENYAGIFHFKFWQYGKWVEVVIDDRLPTYNGELIYMHSTEKNEFWSALLEKAYAKLHGSYEALKGGTTCEAMEDFTGGVTEWYDIKEAPPNLFSIMMKAAERGSMMGCSLEPDPHVLEAETPQGLIRGHAYSITKVCLMDISTPNRQGKLPMIRMRNPWGNDAEWSGPWSDSSPEWRFIPEHTKEEIGLNFDRDGEFWMSFQDFLNHFDRVEICNLSPDSLTEDQQHSSRRKWEMSMFEGEWTSGVTAGGCRNFLETFWHNPQYIISLEDPDDEDDDGKCTAIVALMQKNRRSKRNVGIDCLTIGFAIYHLTDRDMQVKPQGLNFFKYRASVARSPHFINTREVCARFKLPPGHYLIVPSTFDPNEEGEFIIRVFSETRNNMEENDDEVGFGETDDRIAPSLPPPTPKEEDDPQRIALRRLFDSVAGSDEEVDWQELKRILDHSMRDVMVGSDGFSKDAVRSMVAMLDKDRSGRLGFEEFEALLTDIAKWRAVFKLYDTRRTGSIDGFHLRGALNSAGYHLNNRLLNALAHRYGSREGQIPFDDFLMCAIKVRTFIEMFRERDTDNSDTAFFNLDDWLERTIYS</sequence>
<comment type="function">
    <text evidence="6">Calcium-regulated non-lysosomal thiol-protease.</text>
</comment>
<comment type="activity regulation">
    <text evidence="6">Activated by millimolar concentrations of calcium.</text>
</comment>
<comment type="interaction">
    <interactant intactId="EBI-132069">
        <id>Q9VT65</id>
    </interactant>
    <interactant intactId="EBI-82224">
        <id>P12370</id>
        <label>Pka-C1</label>
    </interactant>
    <organismsDiffer>false</organismsDiffer>
    <experiments>2</experiments>
</comment>
<comment type="subcellular location">
    <subcellularLocation>
        <location evidence="8">Cytoplasm</location>
    </subcellularLocation>
    <subcellularLocation>
        <location evidence="8">Membrane</location>
    </subcellularLocation>
    <text>Translocates to intracellular membranes when calcium levels are increased.</text>
</comment>
<comment type="tissue specificity">
    <text evidence="8">Strongly expressed in follicular and border cells of the oocyte. Ubiquitously expressed in early embryos. Localized to the trachea and their orifices, and to the larynx of late embryos. Restricted to the salivary gland in third instar larvae.</text>
</comment>
<comment type="developmental stage">
    <text evidence="8">Expressed in all developmental stages, with highest expression in the egg, probably of maternal origin. Very low expression in the early larva, rising through larval development up to the third larval stage. Constant expression in the pupa and adult.</text>
</comment>
<comment type="PTM">
    <text>Undergoes calcium-dependent autolytic cleavage between Asn-74 and Ala-75 and between Gln-224 and Asn-225 to produce two major products, calpain B catalytic subunit 1 and calpain B catalytic subunit 2. This autolysis is necessary for activation of the protein.</text>
</comment>
<comment type="similarity">
    <text evidence="2">Belongs to the peptidase C2 family.</text>
</comment>
<protein>
    <recommendedName>
        <fullName>Calpain-B</fullName>
        <ecNumber>3.4.22.-</ecNumber>
    </recommendedName>
    <alternativeName>
        <fullName>Calcium-activated neutral proteinase B</fullName>
        <shortName>CANP B</shortName>
    </alternativeName>
    <component>
        <recommendedName>
            <fullName>Calpain-B catalytic subunit 1</fullName>
        </recommendedName>
    </component>
    <component>
        <recommendedName>
            <fullName>Calpain-B catalytic subunit 2</fullName>
        </recommendedName>
    </component>
</protein>
<proteinExistence type="evidence at protein level"/>